<feature type="chain" id="PRO_0000462124" description="D-glutamate N-acetyltransferase">
    <location>
        <begin position="1"/>
        <end position="332"/>
    </location>
</feature>
<comment type="function">
    <text evidence="1">N-acetyltransferase involved in a deamination-independent D-glutamate degradation pathway, named the DgcN-DgcA pathway (PubMed:36690779). Catalyzes the transfer of the acetyl moiety from acetyl-CoA to D-glutamate to generate N-acetyl-D-glutamate (PubMed:36690779). Can also acetylate D-aspartate and D-glutamine, with lower efficiency (PubMed:36690779). Has low activity with D-asparagine (PubMed:36690779). Cannot use succinyl-CoA (PubMed:36690779).</text>
</comment>
<comment type="catalytic activity">
    <reaction evidence="1">
        <text>D-glutamate + acetyl-CoA = N-acetyl-D-glutamate + CoA + H(+)</text>
        <dbReference type="Rhea" id="RHEA:76495"/>
        <dbReference type="ChEBI" id="CHEBI:15378"/>
        <dbReference type="ChEBI" id="CHEBI:29986"/>
        <dbReference type="ChEBI" id="CHEBI:57287"/>
        <dbReference type="ChEBI" id="CHEBI:57288"/>
        <dbReference type="ChEBI" id="CHEBI:195260"/>
        <dbReference type="EC" id="2.3.1.312"/>
    </reaction>
    <physiologicalReaction direction="left-to-right" evidence="1">
        <dbReference type="Rhea" id="RHEA:76496"/>
    </physiologicalReaction>
</comment>
<comment type="catalytic activity">
    <reaction evidence="1">
        <text>D-aspartate + acetyl-CoA = N-acetyl-D-aspartate + CoA + H(+)</text>
        <dbReference type="Rhea" id="RHEA:76551"/>
        <dbReference type="ChEBI" id="CHEBI:15378"/>
        <dbReference type="ChEBI" id="CHEBI:29990"/>
        <dbReference type="ChEBI" id="CHEBI:57287"/>
        <dbReference type="ChEBI" id="CHEBI:57288"/>
        <dbReference type="ChEBI" id="CHEBI:195274"/>
        <dbReference type="EC" id="2.3.1.312"/>
    </reaction>
</comment>
<comment type="catalytic activity">
    <reaction evidence="1">
        <text>D-glutamine + acetyl-CoA = N-acetyl-D-glutamine + CoA + H(+)</text>
        <dbReference type="Rhea" id="RHEA:76547"/>
        <dbReference type="ChEBI" id="CHEBI:15378"/>
        <dbReference type="ChEBI" id="CHEBI:57287"/>
        <dbReference type="ChEBI" id="CHEBI:57288"/>
        <dbReference type="ChEBI" id="CHEBI:58000"/>
        <dbReference type="ChEBI" id="CHEBI:143880"/>
        <dbReference type="EC" id="2.3.1.312"/>
    </reaction>
</comment>
<comment type="pathway">
    <text evidence="4">Amino-acid degradation.</text>
</comment>
<comment type="induction">
    <text evidence="1">Expression is up-regulated in the presence of D-glutamate (PubMed:36690779). Transcriptionally regulated by DgcR (PubMed:36690779).</text>
</comment>
<comment type="disruption phenotype">
    <text evidence="1">The growth of the deletion mutant is significantly reduced with D-glutamate as the sole nitrogen source.</text>
</comment>
<comment type="similarity">
    <text evidence="3">Belongs to the N-acetyltransferase DgcN family.</text>
</comment>
<sequence>MQIKPPYLLFIGDATDKLSIKMAQSLADWRAELCVGELSVNGCTVSTGLNQCSICEAAKLGAKTFVLGFANSGGVLDKKWLPIISEAIENGMNIVSGLHDKLTNFDELVSLSQKHNTNLLDIRHPSTAFATGKGYKRKGKRLLTVGTDCSVGKMYTSLSLEKAMKEQNIDVDFRATGQCGILISGSGVAIDCVIADFISGAAESLSPDAEETHWDIIEGQGSLSHPAFAGVSLGLLHGSQPDALVICHALNRTHMRGLLHTSFPSIETTIELNIAAAKLTNPDVQVVGISVNTSSVSIEQGNEICERLSQTFGVPCVDPLRDGVDSIVANLC</sequence>
<organism>
    <name type="scientific">Pseudoalteromonas sp</name>
    <dbReference type="NCBI Taxonomy" id="53249"/>
    <lineage>
        <taxon>Bacteria</taxon>
        <taxon>Pseudomonadati</taxon>
        <taxon>Pseudomonadota</taxon>
        <taxon>Gammaproteobacteria</taxon>
        <taxon>Alteromonadales</taxon>
        <taxon>Pseudoalteromonadaceae</taxon>
        <taxon>Pseudoalteromonas</taxon>
    </lineage>
</organism>
<name>DGCN_PSEAS</name>
<accession>P0DXZ1</accession>
<keyword id="KW-0808">Transferase</keyword>
<proteinExistence type="evidence at protein level"/>
<evidence type="ECO:0000269" key="1">
    <source>
    </source>
</evidence>
<evidence type="ECO:0000303" key="2">
    <source>
    </source>
</evidence>
<evidence type="ECO:0000305" key="3"/>
<evidence type="ECO:0000305" key="4">
    <source>
    </source>
</evidence>
<reference key="1">
    <citation type="journal article" date="2023" name="ISME J.">
        <title>Novel D-glutamate catabolic pathway in marine Proteobacteria and halophilic archaea.</title>
        <authorList>
            <person name="Yu Y."/>
            <person name="Wang P."/>
            <person name="Cao H.Y."/>
            <person name="Teng Z.J."/>
            <person name="Zhu Y."/>
            <person name="Wang M."/>
            <person name="McMinn A."/>
            <person name="Chen Y."/>
            <person name="Xiang H."/>
            <person name="Zhang Y.Z."/>
            <person name="Chen X.L."/>
            <person name="Zhang Y.Q."/>
        </authorList>
    </citation>
    <scope>NUCLEOTIDE SEQUENCE [GENOMIC DNA]</scope>
    <scope>FUNCTION</scope>
    <scope>CATALYTIC ACTIVITY</scope>
    <scope>INDUCTION</scope>
    <scope>DISRUPTION PHENOTYPE</scope>
    <source>
        <strain>CF6-2</strain>
    </source>
</reference>
<protein>
    <recommendedName>
        <fullName evidence="3">D-glutamate N-acetyltransferase</fullName>
        <ecNumber evidence="1">2.3.1.312</ecNumber>
    </recommendedName>
</protein>
<gene>
    <name evidence="2" type="primary">dgcN</name>
</gene>
<dbReference type="EC" id="2.3.1.312" evidence="1"/>
<dbReference type="EMBL" id="ON505816">
    <property type="protein sequence ID" value="USH59575.1"/>
    <property type="molecule type" value="Genomic_DNA"/>
</dbReference>
<dbReference type="Gene3D" id="3.40.50.720">
    <property type="entry name" value="NAD(P)-binding Rossmann-like Domain"/>
    <property type="match status" value="1"/>
</dbReference>
<dbReference type="Gene3D" id="3.40.50.300">
    <property type="entry name" value="P-loop containing nucleotide triphosphate hydrolases"/>
    <property type="match status" value="1"/>
</dbReference>
<dbReference type="InterPro" id="IPR011669">
    <property type="entry name" value="DgcN-like"/>
</dbReference>
<dbReference type="InterPro" id="IPR035086">
    <property type="entry name" value="DgcN-like_C"/>
</dbReference>
<dbReference type="InterPro" id="IPR035402">
    <property type="entry name" value="DgcN-like_N"/>
</dbReference>
<dbReference type="InterPro" id="IPR027417">
    <property type="entry name" value="P-loop_NTPase"/>
</dbReference>
<dbReference type="NCBIfam" id="NF041892">
    <property type="entry name" value="DgcN"/>
    <property type="match status" value="1"/>
</dbReference>
<dbReference type="PANTHER" id="PTHR40690:SF1">
    <property type="entry name" value="DUF1611 DOMAIN-CONTAINING PROTEIN"/>
    <property type="match status" value="1"/>
</dbReference>
<dbReference type="PANTHER" id="PTHR40690">
    <property type="entry name" value="GLL3100 PROTEIN"/>
    <property type="match status" value="1"/>
</dbReference>
<dbReference type="Pfam" id="PF07755">
    <property type="entry name" value="DUF1611"/>
    <property type="match status" value="1"/>
</dbReference>
<dbReference type="Pfam" id="PF17396">
    <property type="entry name" value="DUF1611_N"/>
    <property type="match status" value="1"/>
</dbReference>
<dbReference type="PIRSF" id="PIRSF026760">
    <property type="entry name" value="UCP026760"/>
    <property type="match status" value="1"/>
</dbReference>
<dbReference type="SUPFAM" id="SSF52540">
    <property type="entry name" value="P-loop containing nucleoside triphosphate hydrolases"/>
    <property type="match status" value="1"/>
</dbReference>